<sequence>MSIDINWEAATSGPDGEKLAERIRSFIHDKFQQIALPRFIRSVEVNSFDFGTVSPELQVRDICDPFNDFYEEDEDGEDLSESSVSDEPAPSSQGLSQSTPNGDAGSSNSSSNGDGGGNTNSRVGYFQRRYPSGEYAGDFPQPLMSPINLGESFNPYLFPRAGTPGIPGGTSNLGYYNMPRGGLSGTQTPLASVASVARGGPLSLAEGWPPPARQRERARSSDADVDSPQSRSRPSTSSTRQRTSTDGGTPHDSAEIPESESVITGHLDSALPTRRMREQKPDDFQVLCRLQYSGNMRLSITAQILLDYPMPSFVGLPLKLNITGFTFDGVAVVAYIRKRIHVCFLSPEDADTLLGADDKMASTEGYHDHHNHHHSGNTNTTGSRRSNDSLLREIRVESEIGRKESGKQVLKNVGKVEKFVLEQVRRIFEEEFVYPSFWTFLV</sequence>
<feature type="chain" id="PRO_0000384294" description="Mitochondrial distribution and morphology protein 12">
    <location>
        <begin position="1"/>
        <end position="442"/>
    </location>
</feature>
<feature type="domain" description="SMP-LTD" evidence="1">
    <location>
        <begin position="1"/>
        <end position="442"/>
    </location>
</feature>
<feature type="region of interest" description="Disordered" evidence="2">
    <location>
        <begin position="67"/>
        <end position="125"/>
    </location>
</feature>
<feature type="region of interest" description="Disordered" evidence="2">
    <location>
        <begin position="202"/>
        <end position="277"/>
    </location>
</feature>
<feature type="region of interest" description="Disordered" evidence="2">
    <location>
        <begin position="364"/>
        <end position="387"/>
    </location>
</feature>
<feature type="compositionally biased region" description="Acidic residues" evidence="2">
    <location>
        <begin position="69"/>
        <end position="80"/>
    </location>
</feature>
<feature type="compositionally biased region" description="Polar residues" evidence="2">
    <location>
        <begin position="90"/>
        <end position="100"/>
    </location>
</feature>
<feature type="compositionally biased region" description="Low complexity" evidence="2">
    <location>
        <begin position="101"/>
        <end position="112"/>
    </location>
</feature>
<feature type="compositionally biased region" description="Basic and acidic residues" evidence="2">
    <location>
        <begin position="213"/>
        <end position="222"/>
    </location>
</feature>
<feature type="compositionally biased region" description="Low complexity" evidence="2">
    <location>
        <begin position="227"/>
        <end position="245"/>
    </location>
</feature>
<keyword id="KW-0256">Endoplasmic reticulum</keyword>
<keyword id="KW-0445">Lipid transport</keyword>
<keyword id="KW-0446">Lipid-binding</keyword>
<keyword id="KW-0472">Membrane</keyword>
<keyword id="KW-0496">Mitochondrion</keyword>
<keyword id="KW-1000">Mitochondrion outer membrane</keyword>
<keyword id="KW-1185">Reference proteome</keyword>
<keyword id="KW-0813">Transport</keyword>
<protein>
    <recommendedName>
        <fullName evidence="1">Mitochondrial distribution and morphology protein 12</fullName>
    </recommendedName>
    <alternativeName>
        <fullName evidence="1">Mitochondrial inheritance component MDM12</fullName>
    </alternativeName>
</protein>
<evidence type="ECO:0000255" key="1">
    <source>
        <dbReference type="HAMAP-Rule" id="MF_03104"/>
    </source>
</evidence>
<evidence type="ECO:0000256" key="2">
    <source>
        <dbReference type="SAM" id="MobiDB-lite"/>
    </source>
</evidence>
<evidence type="ECO:0000305" key="3"/>
<accession>C5FUT6</accession>
<name>MDM12_ARTOC</name>
<gene>
    <name evidence="1" type="primary">MDM12</name>
    <name type="ORF">MCYG_06489</name>
</gene>
<organism>
    <name type="scientific">Arthroderma otae (strain ATCC MYA-4605 / CBS 113480)</name>
    <name type="common">Microsporum canis</name>
    <dbReference type="NCBI Taxonomy" id="554155"/>
    <lineage>
        <taxon>Eukaryota</taxon>
        <taxon>Fungi</taxon>
        <taxon>Dikarya</taxon>
        <taxon>Ascomycota</taxon>
        <taxon>Pezizomycotina</taxon>
        <taxon>Eurotiomycetes</taxon>
        <taxon>Eurotiomycetidae</taxon>
        <taxon>Onygenales</taxon>
        <taxon>Arthrodermataceae</taxon>
        <taxon>Microsporum</taxon>
    </lineage>
</organism>
<proteinExistence type="inferred from homology"/>
<reference key="1">
    <citation type="journal article" date="2012" name="MBio">
        <title>Comparative genome analysis of Trichophyton rubrum and related dermatophytes reveals candidate genes involved in infection.</title>
        <authorList>
            <person name="Martinez D.A."/>
            <person name="Oliver B.G."/>
            <person name="Graeser Y."/>
            <person name="Goldberg J.M."/>
            <person name="Li W."/>
            <person name="Martinez-Rossi N.M."/>
            <person name="Monod M."/>
            <person name="Shelest E."/>
            <person name="Barton R.C."/>
            <person name="Birch E."/>
            <person name="Brakhage A.A."/>
            <person name="Chen Z."/>
            <person name="Gurr S.J."/>
            <person name="Heiman D."/>
            <person name="Heitman J."/>
            <person name="Kosti I."/>
            <person name="Rossi A."/>
            <person name="Saif S."/>
            <person name="Samalova M."/>
            <person name="Saunders C.W."/>
            <person name="Shea T."/>
            <person name="Summerbell R.C."/>
            <person name="Xu J."/>
            <person name="Young S."/>
            <person name="Zeng Q."/>
            <person name="Birren B.W."/>
            <person name="Cuomo C.A."/>
            <person name="White T.C."/>
        </authorList>
    </citation>
    <scope>NUCLEOTIDE SEQUENCE [LARGE SCALE GENOMIC DNA]</scope>
    <source>
        <strain>ATCC MYA-4605 / CBS 113480</strain>
    </source>
</reference>
<comment type="function">
    <text evidence="1">Component of the ERMES/MDM complex, which serves as a molecular tether to connect the endoplasmic reticulum (ER) and mitochondria. Components of this complex are involved in the control of mitochondrial shape and protein biogenesis, and function in nonvesicular lipid trafficking between the ER and mitochondria. MDM12 is required for the interaction of the ER-resident membrane protein MMM1 and the outer mitochondrial membrane-resident beta-barrel protein MDM10. The MDM12-MMM1 subcomplex functions in the major beta-barrel assembly pathway that is responsible for biogenesis of all mitochondrial outer membrane beta-barrel proteins, and acts in a late step after the SAM complex. The MDM10-MDM12-MMM1 subcomplex further acts in the TOM40-specific pathway after the action of the MDM12-MMM1 complex. Essential for establishing and maintaining the structure of mitochondria and maintenance of mtDNA nucleoids.</text>
</comment>
<comment type="subunit">
    <text evidence="1">Component of the ER-mitochondria encounter structure (ERMES) or MDM complex, composed of MMM1, MDM10, MDM12 and MDM34. A MMM1 homodimer associates with one molecule of MDM12 on each side in a pairwise head-to-tail manner, and the SMP-LTD domains of MMM1 and MDM12 generate a continuous hydrophobic tunnel for phospholipid trafficking.</text>
</comment>
<comment type="subcellular location">
    <subcellularLocation>
        <location evidence="1">Mitochondrion outer membrane</location>
        <topology evidence="1">Peripheral membrane protein</topology>
        <orientation evidence="1">Cytoplasmic side</orientation>
    </subcellularLocation>
    <subcellularLocation>
        <location evidence="1">Endoplasmic reticulum membrane</location>
        <topology evidence="1">Peripheral membrane protein</topology>
        <orientation evidence="1">Cytoplasmic side</orientation>
    </subcellularLocation>
    <text evidence="1">The ERMES/MDM complex localizes to a few discrete foci (around 10 per single cell), that represent mitochondria-endoplasmic reticulum junctions. These foci are often found next to mtDNA nucleoids.</text>
</comment>
<comment type="domain">
    <text evidence="1">The SMP-LTD domain is a barrel-like domain that can bind various types of glycerophospholipids in its interior and mediate their transfer between two adjacent bilayers.</text>
</comment>
<comment type="similarity">
    <text evidence="1">Belongs to the MDM12 family.</text>
</comment>
<comment type="sequence caution" evidence="3">
    <conflict type="erroneous initiation">
        <sequence resource="EMBL-CDS" id="EEQ33670"/>
    </conflict>
</comment>
<dbReference type="EMBL" id="DS995706">
    <property type="protein sequence ID" value="EEQ33670.1"/>
    <property type="status" value="ALT_INIT"/>
    <property type="molecule type" value="Genomic_DNA"/>
</dbReference>
<dbReference type="RefSeq" id="XP_002844525.1">
    <property type="nucleotide sequence ID" value="XM_002844479.1"/>
</dbReference>
<dbReference type="SMR" id="C5FUT6"/>
<dbReference type="STRING" id="554155.C5FUT6"/>
<dbReference type="GeneID" id="9222297"/>
<dbReference type="eggNOG" id="ENOG502QQS2">
    <property type="taxonomic scope" value="Eukaryota"/>
</dbReference>
<dbReference type="HOGENOM" id="CLU_026794_0_0_1"/>
<dbReference type="OrthoDB" id="3356905at2759"/>
<dbReference type="Proteomes" id="UP000002035">
    <property type="component" value="Unassembled WGS sequence"/>
</dbReference>
<dbReference type="GO" id="GO:0005789">
    <property type="term" value="C:endoplasmic reticulum membrane"/>
    <property type="evidence" value="ECO:0007669"/>
    <property type="project" value="UniProtKB-SubCell"/>
</dbReference>
<dbReference type="GO" id="GO:0032865">
    <property type="term" value="C:ERMES complex"/>
    <property type="evidence" value="ECO:0007669"/>
    <property type="project" value="UniProtKB-UniRule"/>
</dbReference>
<dbReference type="GO" id="GO:0008289">
    <property type="term" value="F:lipid binding"/>
    <property type="evidence" value="ECO:0007669"/>
    <property type="project" value="UniProtKB-KW"/>
</dbReference>
<dbReference type="GO" id="GO:0000002">
    <property type="term" value="P:mitochondrial genome maintenance"/>
    <property type="evidence" value="ECO:0007669"/>
    <property type="project" value="UniProtKB-UniRule"/>
</dbReference>
<dbReference type="GO" id="GO:1990456">
    <property type="term" value="P:mitochondrion-endoplasmic reticulum membrane tethering"/>
    <property type="evidence" value="ECO:0007669"/>
    <property type="project" value="TreeGrafter"/>
</dbReference>
<dbReference type="GO" id="GO:0015914">
    <property type="term" value="P:phospholipid transport"/>
    <property type="evidence" value="ECO:0007669"/>
    <property type="project" value="TreeGrafter"/>
</dbReference>
<dbReference type="GO" id="GO:0045040">
    <property type="term" value="P:protein insertion into mitochondrial outer membrane"/>
    <property type="evidence" value="ECO:0007669"/>
    <property type="project" value="UniProtKB-UniRule"/>
</dbReference>
<dbReference type="CDD" id="cd21672">
    <property type="entry name" value="SMP_Mdm12"/>
    <property type="match status" value="1"/>
</dbReference>
<dbReference type="HAMAP" id="MF_03104">
    <property type="entry name" value="Mdm12"/>
    <property type="match status" value="1"/>
</dbReference>
<dbReference type="InterPro" id="IPR027532">
    <property type="entry name" value="Mdm12"/>
</dbReference>
<dbReference type="InterPro" id="IPR019411">
    <property type="entry name" value="MMM1_dom"/>
</dbReference>
<dbReference type="InterPro" id="IPR031468">
    <property type="entry name" value="SMP_LBD"/>
</dbReference>
<dbReference type="PANTHER" id="PTHR28204">
    <property type="entry name" value="MITOCHONDRIAL DISTRIBUTION AND MORPHOLOGY PROTEIN 12"/>
    <property type="match status" value="1"/>
</dbReference>
<dbReference type="PANTHER" id="PTHR28204:SF1">
    <property type="entry name" value="MITOCHONDRIAL DISTRIBUTION AND MORPHOLOGY PROTEIN 12"/>
    <property type="match status" value="1"/>
</dbReference>
<dbReference type="Pfam" id="PF10296">
    <property type="entry name" value="MMM1"/>
    <property type="match status" value="1"/>
</dbReference>
<dbReference type="PROSITE" id="PS51847">
    <property type="entry name" value="SMP"/>
    <property type="match status" value="1"/>
</dbReference>